<protein>
    <recommendedName>
        <fullName evidence="1">Leucine--tRNA ligase</fullName>
        <ecNumber evidence="1">6.1.1.4</ecNumber>
    </recommendedName>
    <alternativeName>
        <fullName evidence="1">Leucyl-tRNA synthetase</fullName>
        <shortName evidence="1">LeuRS</shortName>
    </alternativeName>
</protein>
<accession>Q1I4G7</accession>
<dbReference type="EC" id="6.1.1.4" evidence="1"/>
<dbReference type="EMBL" id="CT573326">
    <property type="protein sequence ID" value="CAK17469.1"/>
    <property type="molecule type" value="Genomic_DNA"/>
</dbReference>
<dbReference type="RefSeq" id="WP_011535831.1">
    <property type="nucleotide sequence ID" value="NC_008027.1"/>
</dbReference>
<dbReference type="SMR" id="Q1I4G7"/>
<dbReference type="STRING" id="384676.PSEEN4813"/>
<dbReference type="GeneID" id="32807772"/>
<dbReference type="KEGG" id="pen:PSEEN4813"/>
<dbReference type="eggNOG" id="COG0495">
    <property type="taxonomic scope" value="Bacteria"/>
</dbReference>
<dbReference type="HOGENOM" id="CLU_004427_0_0_6"/>
<dbReference type="OrthoDB" id="9810365at2"/>
<dbReference type="Proteomes" id="UP000000658">
    <property type="component" value="Chromosome"/>
</dbReference>
<dbReference type="GO" id="GO:0005829">
    <property type="term" value="C:cytosol"/>
    <property type="evidence" value="ECO:0007669"/>
    <property type="project" value="TreeGrafter"/>
</dbReference>
<dbReference type="GO" id="GO:0002161">
    <property type="term" value="F:aminoacyl-tRNA deacylase activity"/>
    <property type="evidence" value="ECO:0007669"/>
    <property type="project" value="InterPro"/>
</dbReference>
<dbReference type="GO" id="GO:0005524">
    <property type="term" value="F:ATP binding"/>
    <property type="evidence" value="ECO:0007669"/>
    <property type="project" value="UniProtKB-UniRule"/>
</dbReference>
<dbReference type="GO" id="GO:0004823">
    <property type="term" value="F:leucine-tRNA ligase activity"/>
    <property type="evidence" value="ECO:0007669"/>
    <property type="project" value="UniProtKB-UniRule"/>
</dbReference>
<dbReference type="GO" id="GO:0006429">
    <property type="term" value="P:leucyl-tRNA aminoacylation"/>
    <property type="evidence" value="ECO:0007669"/>
    <property type="project" value="UniProtKB-UniRule"/>
</dbReference>
<dbReference type="CDD" id="cd07958">
    <property type="entry name" value="Anticodon_Ia_Leu_BEm"/>
    <property type="match status" value="1"/>
</dbReference>
<dbReference type="CDD" id="cd00812">
    <property type="entry name" value="LeuRS_core"/>
    <property type="match status" value="1"/>
</dbReference>
<dbReference type="FunFam" id="1.10.730.10:FF:000003">
    <property type="entry name" value="Leucine--tRNA ligase"/>
    <property type="match status" value="1"/>
</dbReference>
<dbReference type="FunFam" id="2.20.28.290:FF:000001">
    <property type="entry name" value="Leucine--tRNA ligase"/>
    <property type="match status" value="1"/>
</dbReference>
<dbReference type="FunFam" id="3.10.20.590:FF:000001">
    <property type="entry name" value="Leucine--tRNA ligase"/>
    <property type="match status" value="1"/>
</dbReference>
<dbReference type="FunFam" id="3.40.50.620:FF:000003">
    <property type="entry name" value="Leucine--tRNA ligase"/>
    <property type="match status" value="1"/>
</dbReference>
<dbReference type="FunFam" id="3.40.50.620:FF:000124">
    <property type="entry name" value="Leucine--tRNA ligase"/>
    <property type="match status" value="1"/>
</dbReference>
<dbReference type="FunFam" id="3.90.740.10:FF:000012">
    <property type="entry name" value="Leucine--tRNA ligase"/>
    <property type="match status" value="1"/>
</dbReference>
<dbReference type="Gene3D" id="2.20.28.290">
    <property type="match status" value="1"/>
</dbReference>
<dbReference type="Gene3D" id="3.10.20.590">
    <property type="match status" value="1"/>
</dbReference>
<dbReference type="Gene3D" id="3.40.50.620">
    <property type="entry name" value="HUPs"/>
    <property type="match status" value="2"/>
</dbReference>
<dbReference type="Gene3D" id="1.10.730.10">
    <property type="entry name" value="Isoleucyl-tRNA Synthetase, Domain 1"/>
    <property type="match status" value="1"/>
</dbReference>
<dbReference type="HAMAP" id="MF_00049_B">
    <property type="entry name" value="Leu_tRNA_synth_B"/>
    <property type="match status" value="1"/>
</dbReference>
<dbReference type="InterPro" id="IPR001412">
    <property type="entry name" value="aa-tRNA-synth_I_CS"/>
</dbReference>
<dbReference type="InterPro" id="IPR002300">
    <property type="entry name" value="aa-tRNA-synth_Ia"/>
</dbReference>
<dbReference type="InterPro" id="IPR002302">
    <property type="entry name" value="Leu-tRNA-ligase"/>
</dbReference>
<dbReference type="InterPro" id="IPR025709">
    <property type="entry name" value="Leu_tRNA-synth_edit"/>
</dbReference>
<dbReference type="InterPro" id="IPR013155">
    <property type="entry name" value="M/V/L/I-tRNA-synth_anticd-bd"/>
</dbReference>
<dbReference type="InterPro" id="IPR015413">
    <property type="entry name" value="Methionyl/Leucyl_tRNA_Synth"/>
</dbReference>
<dbReference type="InterPro" id="IPR014729">
    <property type="entry name" value="Rossmann-like_a/b/a_fold"/>
</dbReference>
<dbReference type="InterPro" id="IPR009080">
    <property type="entry name" value="tRNAsynth_Ia_anticodon-bd"/>
</dbReference>
<dbReference type="InterPro" id="IPR009008">
    <property type="entry name" value="Val/Leu/Ile-tRNA-synth_edit"/>
</dbReference>
<dbReference type="NCBIfam" id="TIGR00396">
    <property type="entry name" value="leuS_bact"/>
    <property type="match status" value="1"/>
</dbReference>
<dbReference type="PANTHER" id="PTHR43740:SF2">
    <property type="entry name" value="LEUCINE--TRNA LIGASE, MITOCHONDRIAL"/>
    <property type="match status" value="1"/>
</dbReference>
<dbReference type="PANTHER" id="PTHR43740">
    <property type="entry name" value="LEUCYL-TRNA SYNTHETASE"/>
    <property type="match status" value="1"/>
</dbReference>
<dbReference type="Pfam" id="PF08264">
    <property type="entry name" value="Anticodon_1"/>
    <property type="match status" value="1"/>
</dbReference>
<dbReference type="Pfam" id="PF00133">
    <property type="entry name" value="tRNA-synt_1"/>
    <property type="match status" value="2"/>
</dbReference>
<dbReference type="Pfam" id="PF13603">
    <property type="entry name" value="tRNA-synt_1_2"/>
    <property type="match status" value="1"/>
</dbReference>
<dbReference type="Pfam" id="PF09334">
    <property type="entry name" value="tRNA-synt_1g"/>
    <property type="match status" value="1"/>
</dbReference>
<dbReference type="PRINTS" id="PR00985">
    <property type="entry name" value="TRNASYNTHLEU"/>
</dbReference>
<dbReference type="SUPFAM" id="SSF47323">
    <property type="entry name" value="Anticodon-binding domain of a subclass of class I aminoacyl-tRNA synthetases"/>
    <property type="match status" value="1"/>
</dbReference>
<dbReference type="SUPFAM" id="SSF52374">
    <property type="entry name" value="Nucleotidylyl transferase"/>
    <property type="match status" value="1"/>
</dbReference>
<dbReference type="SUPFAM" id="SSF50677">
    <property type="entry name" value="ValRS/IleRS/LeuRS editing domain"/>
    <property type="match status" value="1"/>
</dbReference>
<dbReference type="PROSITE" id="PS00178">
    <property type="entry name" value="AA_TRNA_LIGASE_I"/>
    <property type="match status" value="1"/>
</dbReference>
<gene>
    <name evidence="1" type="primary">leuS</name>
    <name type="ordered locus">PSEEN4813</name>
</gene>
<sequence>MHEQYTPRDVEAAAQNAWDEQQSFAVTEQPGKETYYCLSMFPYPSGKLHMGHVRNYTIGDVIARYQRMLGKNVLQPMGWDAFGMPAENAAMKNNVAPAKWTYENIDYMKTQLKSLGLAIDWSREVTTCKPDYYRWEQWLFTRLFEKGVIYRKNGTVNWDPADQTVLANEQVIDGRGWRSGALIEKREIPMYYFRITDYADELLESLDELPGWPEQVKTMQRNWIGKSRGMEVQFPYDQASIGHEGTLKVFTTRPDTLMGATYVAVAAEHPLATQAAQGNAALQAFIDECKSGSVAEADMATQEKKGMATSLFVEHPLTGEKLPVWVANYVLMHYGDGAVMAVPAHDERDFEFAHKYNLPVKAVVRTSAGDDVGSEWLAAYGEHGQLINSGEFDGLDFQGAFDAIEAALIRKDLGKSRTQFRLRDWGISRQRYWGCPIPIIHCPSCGDVPVPEDQLPVTLPENVVPDGAGSPLARMPEFYECTCPKCGTAAKRETDTMDTFVESSWYFARYASPNYDKGLVDPKAANHWLPVDQYIGGIEHAILHLLYARFFHKLMRDEGLVTSNEPFKNLLTQGMVVAETYYRVASNGGKDWFNPADVEIERDAKAKIIGARLKTDGLPVEIGGTEKMSKSKNNGVDPQSMIEQYGADTCRLFMMFASPPDMSLEWSDSGVEGASRFLRRVWRLAQAHVAQGLPGQLDIAALSDEQKVIRRAIHAAIKQASTDVGQFHKFNTAIAQVMTVMNVLEKAPQVTAQDRALLQEGLEAVTLLLAPITPHISHELWKQLGHEQAVIDATWPSVDESALVQDTVTLVVQVNGKLRGQVEMPAAASREEIEAAARNNENVLRFTDGLTIRKVIVVPGKLVNIVAN</sequence>
<keyword id="KW-0030">Aminoacyl-tRNA synthetase</keyword>
<keyword id="KW-0067">ATP-binding</keyword>
<keyword id="KW-0963">Cytoplasm</keyword>
<keyword id="KW-0436">Ligase</keyword>
<keyword id="KW-0547">Nucleotide-binding</keyword>
<keyword id="KW-0648">Protein biosynthesis</keyword>
<organism>
    <name type="scientific">Pseudomonas entomophila (strain L48)</name>
    <dbReference type="NCBI Taxonomy" id="384676"/>
    <lineage>
        <taxon>Bacteria</taxon>
        <taxon>Pseudomonadati</taxon>
        <taxon>Pseudomonadota</taxon>
        <taxon>Gammaproteobacteria</taxon>
        <taxon>Pseudomonadales</taxon>
        <taxon>Pseudomonadaceae</taxon>
        <taxon>Pseudomonas</taxon>
    </lineage>
</organism>
<name>SYL_PSEE4</name>
<feature type="chain" id="PRO_1000009399" description="Leucine--tRNA ligase">
    <location>
        <begin position="1"/>
        <end position="868"/>
    </location>
</feature>
<feature type="short sequence motif" description="'HIGH' region">
    <location>
        <begin position="42"/>
        <end position="52"/>
    </location>
</feature>
<feature type="short sequence motif" description="'KMSKS' region">
    <location>
        <begin position="627"/>
        <end position="631"/>
    </location>
</feature>
<feature type="binding site" evidence="1">
    <location>
        <position position="630"/>
    </location>
    <ligand>
        <name>ATP</name>
        <dbReference type="ChEBI" id="CHEBI:30616"/>
    </ligand>
</feature>
<proteinExistence type="inferred from homology"/>
<comment type="catalytic activity">
    <reaction evidence="1">
        <text>tRNA(Leu) + L-leucine + ATP = L-leucyl-tRNA(Leu) + AMP + diphosphate</text>
        <dbReference type="Rhea" id="RHEA:11688"/>
        <dbReference type="Rhea" id="RHEA-COMP:9613"/>
        <dbReference type="Rhea" id="RHEA-COMP:9622"/>
        <dbReference type="ChEBI" id="CHEBI:30616"/>
        <dbReference type="ChEBI" id="CHEBI:33019"/>
        <dbReference type="ChEBI" id="CHEBI:57427"/>
        <dbReference type="ChEBI" id="CHEBI:78442"/>
        <dbReference type="ChEBI" id="CHEBI:78494"/>
        <dbReference type="ChEBI" id="CHEBI:456215"/>
        <dbReference type="EC" id="6.1.1.4"/>
    </reaction>
</comment>
<comment type="subcellular location">
    <subcellularLocation>
        <location evidence="1">Cytoplasm</location>
    </subcellularLocation>
</comment>
<comment type="similarity">
    <text evidence="1">Belongs to the class-I aminoacyl-tRNA synthetase family.</text>
</comment>
<reference key="1">
    <citation type="journal article" date="2006" name="Nat. Biotechnol.">
        <title>Complete genome sequence of the entomopathogenic and metabolically versatile soil bacterium Pseudomonas entomophila.</title>
        <authorList>
            <person name="Vodovar N."/>
            <person name="Vallenet D."/>
            <person name="Cruveiller S."/>
            <person name="Rouy Z."/>
            <person name="Barbe V."/>
            <person name="Acosta C."/>
            <person name="Cattolico L."/>
            <person name="Jubin C."/>
            <person name="Lajus A."/>
            <person name="Segurens B."/>
            <person name="Vacherie B."/>
            <person name="Wincker P."/>
            <person name="Weissenbach J."/>
            <person name="Lemaitre B."/>
            <person name="Medigue C."/>
            <person name="Boccard F."/>
        </authorList>
    </citation>
    <scope>NUCLEOTIDE SEQUENCE [LARGE SCALE GENOMIC DNA]</scope>
    <source>
        <strain>L48</strain>
    </source>
</reference>
<evidence type="ECO:0000255" key="1">
    <source>
        <dbReference type="HAMAP-Rule" id="MF_00049"/>
    </source>
</evidence>